<dbReference type="EMBL" id="AE000782">
    <property type="protein sequence ID" value="AAB89919.1"/>
    <property type="molecule type" value="Genomic_DNA"/>
</dbReference>
<dbReference type="PIR" id="E69415">
    <property type="entry name" value="E69415"/>
</dbReference>
<dbReference type="RefSeq" id="WP_010878823.1">
    <property type="nucleotide sequence ID" value="NC_000917.1"/>
</dbReference>
<dbReference type="SMR" id="O28943"/>
<dbReference type="STRING" id="224325.AF_1326"/>
<dbReference type="PaxDb" id="224325-AF_1326"/>
<dbReference type="EnsemblBacteria" id="AAB89919">
    <property type="protein sequence ID" value="AAB89919"/>
    <property type="gene ID" value="AF_1326"/>
</dbReference>
<dbReference type="GeneID" id="1484552"/>
<dbReference type="KEGG" id="afu:AF_1326"/>
<dbReference type="eggNOG" id="arCOG00355">
    <property type="taxonomic scope" value="Archaea"/>
</dbReference>
<dbReference type="HOGENOM" id="CLU_033732_3_0_2"/>
<dbReference type="OrthoDB" id="65113at2157"/>
<dbReference type="PhylomeDB" id="O28943"/>
<dbReference type="Proteomes" id="UP000002199">
    <property type="component" value="Chromosome"/>
</dbReference>
<dbReference type="GO" id="GO:0005525">
    <property type="term" value="F:GTP binding"/>
    <property type="evidence" value="ECO:0007669"/>
    <property type="project" value="UniProtKB-UniRule"/>
</dbReference>
<dbReference type="GO" id="GO:0046872">
    <property type="term" value="F:metal ion binding"/>
    <property type="evidence" value="ECO:0007669"/>
    <property type="project" value="UniProtKB-KW"/>
</dbReference>
<dbReference type="GO" id="GO:0051301">
    <property type="term" value="P:cell division"/>
    <property type="evidence" value="ECO:0007669"/>
    <property type="project" value="UniProtKB-KW"/>
</dbReference>
<dbReference type="Gene3D" id="3.40.50.300">
    <property type="entry name" value="P-loop containing nucleotide triphosphate hydrolases"/>
    <property type="match status" value="1"/>
</dbReference>
<dbReference type="HAMAP" id="MF_00321">
    <property type="entry name" value="GTPase_EngB"/>
    <property type="match status" value="1"/>
</dbReference>
<dbReference type="InterPro" id="IPR030393">
    <property type="entry name" value="G_ENGB_dom"/>
</dbReference>
<dbReference type="InterPro" id="IPR006073">
    <property type="entry name" value="GTP-bd"/>
</dbReference>
<dbReference type="InterPro" id="IPR019987">
    <property type="entry name" value="GTP-bd_ribosome_bio_YsxC"/>
</dbReference>
<dbReference type="InterPro" id="IPR027417">
    <property type="entry name" value="P-loop_NTPase"/>
</dbReference>
<dbReference type="NCBIfam" id="NF003255">
    <property type="entry name" value="PRK04213.1"/>
    <property type="match status" value="1"/>
</dbReference>
<dbReference type="PANTHER" id="PTHR11649:SF13">
    <property type="entry name" value="ENGB-TYPE G DOMAIN-CONTAINING PROTEIN"/>
    <property type="match status" value="1"/>
</dbReference>
<dbReference type="PANTHER" id="PTHR11649">
    <property type="entry name" value="MSS1/TRME-RELATED GTP-BINDING PROTEIN"/>
    <property type="match status" value="1"/>
</dbReference>
<dbReference type="Pfam" id="PF01926">
    <property type="entry name" value="MMR_HSR1"/>
    <property type="match status" value="1"/>
</dbReference>
<dbReference type="SUPFAM" id="SSF52540">
    <property type="entry name" value="P-loop containing nucleoside triphosphate hydrolases"/>
    <property type="match status" value="1"/>
</dbReference>
<dbReference type="PROSITE" id="PS51706">
    <property type="entry name" value="G_ENGB"/>
    <property type="match status" value="1"/>
</dbReference>
<feature type="chain" id="PRO_0000157808" description="Probable GTP-binding protein EngB">
    <location>
        <begin position="1"/>
        <end position="197"/>
    </location>
</feature>
<feature type="domain" description="EngB-type G" evidence="1">
    <location>
        <begin position="2"/>
        <end position="186"/>
    </location>
</feature>
<feature type="binding site" evidence="1">
    <location>
        <begin position="10"/>
        <end position="17"/>
    </location>
    <ligand>
        <name>GTP</name>
        <dbReference type="ChEBI" id="CHEBI:37565"/>
    </ligand>
</feature>
<feature type="binding site" evidence="1">
    <location>
        <position position="17"/>
    </location>
    <ligand>
        <name>Mg(2+)</name>
        <dbReference type="ChEBI" id="CHEBI:18420"/>
    </ligand>
</feature>
<feature type="binding site" evidence="1">
    <location>
        <begin position="35"/>
        <end position="39"/>
    </location>
    <ligand>
        <name>GTP</name>
        <dbReference type="ChEBI" id="CHEBI:37565"/>
    </ligand>
</feature>
<feature type="binding site" evidence="1">
    <location>
        <position position="37"/>
    </location>
    <ligand>
        <name>Mg(2+)</name>
        <dbReference type="ChEBI" id="CHEBI:18420"/>
    </ligand>
</feature>
<feature type="binding site" evidence="1">
    <location>
        <begin position="52"/>
        <end position="55"/>
    </location>
    <ligand>
        <name>GTP</name>
        <dbReference type="ChEBI" id="CHEBI:37565"/>
    </ligand>
</feature>
<feature type="binding site" evidence="1">
    <location>
        <begin position="132"/>
        <end position="135"/>
    </location>
    <ligand>
        <name>GTP</name>
        <dbReference type="ChEBI" id="CHEBI:37565"/>
    </ligand>
</feature>
<feature type="binding site" evidence="1">
    <location>
        <begin position="166"/>
        <end position="168"/>
    </location>
    <ligand>
        <name>GTP</name>
        <dbReference type="ChEBI" id="CHEBI:37565"/>
    </ligand>
</feature>
<sequence length="197" mass="22554">MKVKEVIFAGRSNVGKSTLFSALFKFEVRKGKKPGTTIRPNSFQVGSVIFTDLPGFGYVSGYSRNFSERVKDFVVEYIETNARRIVASVEVIDASSFLEIAERWEKRGYIPVEIEMFEFLNDVTPRVFLAANKMDKVDDITNLNKIAEMLGMQPPWEKWRHVIYPVCAKKGEVSALKRDLKQYLLSLNLRDAAKAFR</sequence>
<keyword id="KW-0131">Cell cycle</keyword>
<keyword id="KW-0132">Cell division</keyword>
<keyword id="KW-0342">GTP-binding</keyword>
<keyword id="KW-0460">Magnesium</keyword>
<keyword id="KW-0479">Metal-binding</keyword>
<keyword id="KW-0547">Nucleotide-binding</keyword>
<keyword id="KW-1185">Reference proteome</keyword>
<keyword id="KW-0717">Septation</keyword>
<organism>
    <name type="scientific">Archaeoglobus fulgidus (strain ATCC 49558 / DSM 4304 / JCM 9628 / NBRC 100126 / VC-16)</name>
    <dbReference type="NCBI Taxonomy" id="224325"/>
    <lineage>
        <taxon>Archaea</taxon>
        <taxon>Methanobacteriati</taxon>
        <taxon>Methanobacteriota</taxon>
        <taxon>Archaeoglobi</taxon>
        <taxon>Archaeoglobales</taxon>
        <taxon>Archaeoglobaceae</taxon>
        <taxon>Archaeoglobus</taxon>
    </lineage>
</organism>
<protein>
    <recommendedName>
        <fullName evidence="1">Probable GTP-binding protein EngB</fullName>
    </recommendedName>
</protein>
<name>ENGB_ARCFU</name>
<gene>
    <name evidence="1" type="primary">engB</name>
    <name type="ordered locus">AF_1326</name>
</gene>
<reference key="1">
    <citation type="journal article" date="1997" name="Nature">
        <title>The complete genome sequence of the hyperthermophilic, sulphate-reducing archaeon Archaeoglobus fulgidus.</title>
        <authorList>
            <person name="Klenk H.-P."/>
            <person name="Clayton R.A."/>
            <person name="Tomb J.-F."/>
            <person name="White O."/>
            <person name="Nelson K.E."/>
            <person name="Ketchum K.A."/>
            <person name="Dodson R.J."/>
            <person name="Gwinn M.L."/>
            <person name="Hickey E.K."/>
            <person name="Peterson J.D."/>
            <person name="Richardson D.L."/>
            <person name="Kerlavage A.R."/>
            <person name="Graham D.E."/>
            <person name="Kyrpides N.C."/>
            <person name="Fleischmann R.D."/>
            <person name="Quackenbush J."/>
            <person name="Lee N.H."/>
            <person name="Sutton G.G."/>
            <person name="Gill S.R."/>
            <person name="Kirkness E.F."/>
            <person name="Dougherty B.A."/>
            <person name="McKenney K."/>
            <person name="Adams M.D."/>
            <person name="Loftus B.J."/>
            <person name="Peterson S.N."/>
            <person name="Reich C.I."/>
            <person name="McNeil L.K."/>
            <person name="Badger J.H."/>
            <person name="Glodek A."/>
            <person name="Zhou L."/>
            <person name="Overbeek R."/>
            <person name="Gocayne J.D."/>
            <person name="Weidman J.F."/>
            <person name="McDonald L.A."/>
            <person name="Utterback T.R."/>
            <person name="Cotton M.D."/>
            <person name="Spriggs T."/>
            <person name="Artiach P."/>
            <person name="Kaine B.P."/>
            <person name="Sykes S.M."/>
            <person name="Sadow P.W."/>
            <person name="D'Andrea K.P."/>
            <person name="Bowman C."/>
            <person name="Fujii C."/>
            <person name="Garland S.A."/>
            <person name="Mason T.M."/>
            <person name="Olsen G.J."/>
            <person name="Fraser C.M."/>
            <person name="Smith H.O."/>
            <person name="Woese C.R."/>
            <person name="Venter J.C."/>
        </authorList>
    </citation>
    <scope>NUCLEOTIDE SEQUENCE [LARGE SCALE GENOMIC DNA]</scope>
    <source>
        <strain>ATCC 49558 / DSM 4304 / JCM 9628 / NBRC 100126 / VC-16</strain>
    </source>
</reference>
<proteinExistence type="inferred from homology"/>
<evidence type="ECO:0000255" key="1">
    <source>
        <dbReference type="HAMAP-Rule" id="MF_00321"/>
    </source>
</evidence>
<comment type="function">
    <text evidence="1">Necessary for normal cell division and for the maintenance of normal septation.</text>
</comment>
<comment type="cofactor">
    <cofactor evidence="1">
        <name>Mg(2+)</name>
        <dbReference type="ChEBI" id="CHEBI:18420"/>
    </cofactor>
</comment>
<comment type="similarity">
    <text evidence="1">Belongs to the TRAFAC class TrmE-Era-EngA-EngB-Septin-like GTPase superfamily. EngB GTPase family.</text>
</comment>
<accession>O28943</accession>